<dbReference type="EMBL" id="AY900120">
    <property type="protein sequence ID" value="AAW82752.1"/>
    <property type="molecule type" value="mRNA"/>
</dbReference>
<dbReference type="EMBL" id="AP008208">
    <property type="protein sequence ID" value="BAF08651.2"/>
    <property type="molecule type" value="Genomic_DNA"/>
</dbReference>
<dbReference type="EMBL" id="AP014958">
    <property type="protein sequence ID" value="BAS78464.1"/>
    <property type="status" value="ALT_SEQ"/>
    <property type="molecule type" value="Genomic_DNA"/>
</dbReference>
<dbReference type="EMBL" id="CM000139">
    <property type="protein sequence ID" value="EEE56891.1"/>
    <property type="molecule type" value="Genomic_DNA"/>
</dbReference>
<dbReference type="RefSeq" id="XP_015622822.1">
    <property type="nucleotide sequence ID" value="XM_015767336.1"/>
</dbReference>
<dbReference type="SMR" id="Q0E1I7"/>
<dbReference type="STRING" id="39947.A0A0P0VIH5"/>
<dbReference type="PaxDb" id="39947-A0A0P0VIH5"/>
<dbReference type="EnsemblPlants" id="Os02t0437200-02">
    <property type="protein sequence ID" value="Os02t0437200-02"/>
    <property type="gene ID" value="Os02g0437200"/>
</dbReference>
<dbReference type="Gramene" id="Os02t0437200-02">
    <property type="protein sequence ID" value="Os02t0437200-02"/>
    <property type="gene ID" value="Os02g0437200"/>
</dbReference>
<dbReference type="KEGG" id="dosa:Os02g0437200"/>
<dbReference type="KEGG" id="osa:4329226"/>
<dbReference type="eggNOG" id="KOG3065">
    <property type="taxonomic scope" value="Eukaryota"/>
</dbReference>
<dbReference type="HOGENOM" id="CLU_1752764_0_0_1"/>
<dbReference type="OrthoDB" id="19261at2759"/>
<dbReference type="Proteomes" id="UP000000763">
    <property type="component" value="Chromosome 2"/>
</dbReference>
<dbReference type="Proteomes" id="UP000007752">
    <property type="component" value="Chromosome 2"/>
</dbReference>
<dbReference type="Proteomes" id="UP000059680">
    <property type="component" value="Chromosome 2"/>
</dbReference>
<dbReference type="GO" id="GO:0005886">
    <property type="term" value="C:plasma membrane"/>
    <property type="evidence" value="ECO:0000318"/>
    <property type="project" value="GO_Central"/>
</dbReference>
<dbReference type="GO" id="GO:0031201">
    <property type="term" value="C:SNARE complex"/>
    <property type="evidence" value="ECO:0007669"/>
    <property type="project" value="InterPro"/>
</dbReference>
<dbReference type="GO" id="GO:0005484">
    <property type="term" value="F:SNAP receptor activity"/>
    <property type="evidence" value="ECO:0007669"/>
    <property type="project" value="InterPro"/>
</dbReference>
<dbReference type="GO" id="GO:0006952">
    <property type="term" value="P:defense response"/>
    <property type="evidence" value="ECO:0007669"/>
    <property type="project" value="UniProtKB-KW"/>
</dbReference>
<dbReference type="GO" id="GO:0015031">
    <property type="term" value="P:protein transport"/>
    <property type="evidence" value="ECO:0007669"/>
    <property type="project" value="UniProtKB-KW"/>
</dbReference>
<dbReference type="CDD" id="cd15841">
    <property type="entry name" value="SNARE_Qc"/>
    <property type="match status" value="1"/>
</dbReference>
<dbReference type="CDD" id="cd15861">
    <property type="entry name" value="SNARE_SNAP25N_23N_29N_SEC9N"/>
    <property type="match status" value="1"/>
</dbReference>
<dbReference type="FunFam" id="1.20.5.110:FF:000031">
    <property type="entry name" value="SNAP25 homologous protein SNAP33"/>
    <property type="match status" value="1"/>
</dbReference>
<dbReference type="FunFam" id="1.20.5.110:FF:000040">
    <property type="entry name" value="SNAP25 homologous protein SNAP33"/>
    <property type="match status" value="1"/>
</dbReference>
<dbReference type="Gene3D" id="1.20.5.110">
    <property type="match status" value="2"/>
</dbReference>
<dbReference type="InterPro" id="IPR044766">
    <property type="entry name" value="NPSN/SNAP25-like_N_SNARE"/>
</dbReference>
<dbReference type="InterPro" id="IPR000727">
    <property type="entry name" value="T_SNARE_dom"/>
</dbReference>
<dbReference type="PANTHER" id="PTHR19305">
    <property type="entry name" value="SYNAPTOSOMAL ASSOCIATED PROTEIN"/>
    <property type="match status" value="1"/>
</dbReference>
<dbReference type="PANTHER" id="PTHR19305:SF9">
    <property type="entry name" value="SYNAPTOSOMAL-ASSOCIATED PROTEIN 29"/>
    <property type="match status" value="1"/>
</dbReference>
<dbReference type="SMART" id="SM00397">
    <property type="entry name" value="t_SNARE"/>
    <property type="match status" value="2"/>
</dbReference>
<dbReference type="SUPFAM" id="SSF58038">
    <property type="entry name" value="SNARE fusion complex"/>
    <property type="match status" value="2"/>
</dbReference>
<dbReference type="PROSITE" id="PS50192">
    <property type="entry name" value="T_SNARE"/>
    <property type="match status" value="1"/>
</dbReference>
<organism>
    <name type="scientific">Oryza sativa subsp. japonica</name>
    <name type="common">Rice</name>
    <dbReference type="NCBI Taxonomy" id="39947"/>
    <lineage>
        <taxon>Eukaryota</taxon>
        <taxon>Viridiplantae</taxon>
        <taxon>Streptophyta</taxon>
        <taxon>Embryophyta</taxon>
        <taxon>Tracheophyta</taxon>
        <taxon>Spermatophyta</taxon>
        <taxon>Magnoliopsida</taxon>
        <taxon>Liliopsida</taxon>
        <taxon>Poales</taxon>
        <taxon>Poaceae</taxon>
        <taxon>BOP clade</taxon>
        <taxon>Oryzoideae</taxon>
        <taxon>Oryzeae</taxon>
        <taxon>Oryzinae</taxon>
        <taxon>Oryza</taxon>
        <taxon>Oryza sativa</taxon>
    </lineage>
</organism>
<reference key="1">
    <citation type="journal article" date="2008" name="Mol. Biol. Rep.">
        <title>Molecular cloning and characterization of a novel SNAP25-type protein gene OsSNAP32 in rice (Oryza sativa L.).</title>
        <authorList>
            <person name="Bao Y.M."/>
            <person name="Wang J.F."/>
            <person name="Huang J."/>
            <person name="Zhang H.S."/>
        </authorList>
    </citation>
    <scope>NUCLEOTIDE SEQUENCE [MRNA]</scope>
    <scope>SUBCELLULAR LOCATION</scope>
    <scope>TISSUE SPECIFICITY</scope>
    <scope>INDUCTION</scope>
</reference>
<reference key="2">
    <citation type="journal article" date="2005" name="Nature">
        <title>The map-based sequence of the rice genome.</title>
        <authorList>
            <consortium name="International rice genome sequencing project (IRGSP)"/>
        </authorList>
    </citation>
    <scope>NUCLEOTIDE SEQUENCE [LARGE SCALE GENOMIC DNA]</scope>
    <source>
        <strain>cv. Nipponbare</strain>
    </source>
</reference>
<reference key="3">
    <citation type="journal article" date="2008" name="Nucleic Acids Res.">
        <title>The rice annotation project database (RAP-DB): 2008 update.</title>
        <authorList>
            <consortium name="The rice annotation project (RAP)"/>
        </authorList>
    </citation>
    <scope>GENOME REANNOTATION</scope>
    <source>
        <strain>cv. Nipponbare</strain>
    </source>
</reference>
<reference key="4">
    <citation type="journal article" date="2013" name="Rice">
        <title>Improvement of the Oryza sativa Nipponbare reference genome using next generation sequence and optical map data.</title>
        <authorList>
            <person name="Kawahara Y."/>
            <person name="de la Bastide M."/>
            <person name="Hamilton J.P."/>
            <person name="Kanamori H."/>
            <person name="McCombie W.R."/>
            <person name="Ouyang S."/>
            <person name="Schwartz D.C."/>
            <person name="Tanaka T."/>
            <person name="Wu J."/>
            <person name="Zhou S."/>
            <person name="Childs K.L."/>
            <person name="Davidson R.M."/>
            <person name="Lin H."/>
            <person name="Quesada-Ocampo L."/>
            <person name="Vaillancourt B."/>
            <person name="Sakai H."/>
            <person name="Lee S.S."/>
            <person name="Kim J."/>
            <person name="Numa H."/>
            <person name="Itoh T."/>
            <person name="Buell C.R."/>
            <person name="Matsumoto T."/>
        </authorList>
    </citation>
    <scope>GENOME REANNOTATION</scope>
    <source>
        <strain>cv. Nipponbare</strain>
    </source>
</reference>
<reference key="5">
    <citation type="journal article" date="2005" name="PLoS Biol.">
        <title>The genomes of Oryza sativa: a history of duplications.</title>
        <authorList>
            <person name="Yu J."/>
            <person name="Wang J."/>
            <person name="Lin W."/>
            <person name="Li S."/>
            <person name="Li H."/>
            <person name="Zhou J."/>
            <person name="Ni P."/>
            <person name="Dong W."/>
            <person name="Hu S."/>
            <person name="Zeng C."/>
            <person name="Zhang J."/>
            <person name="Zhang Y."/>
            <person name="Li R."/>
            <person name="Xu Z."/>
            <person name="Li S."/>
            <person name="Li X."/>
            <person name="Zheng H."/>
            <person name="Cong L."/>
            <person name="Lin L."/>
            <person name="Yin J."/>
            <person name="Geng J."/>
            <person name="Li G."/>
            <person name="Shi J."/>
            <person name="Liu J."/>
            <person name="Lv H."/>
            <person name="Li J."/>
            <person name="Wang J."/>
            <person name="Deng Y."/>
            <person name="Ran L."/>
            <person name="Shi X."/>
            <person name="Wang X."/>
            <person name="Wu Q."/>
            <person name="Li C."/>
            <person name="Ren X."/>
            <person name="Wang J."/>
            <person name="Wang X."/>
            <person name="Li D."/>
            <person name="Liu D."/>
            <person name="Zhang X."/>
            <person name="Ji Z."/>
            <person name="Zhao W."/>
            <person name="Sun Y."/>
            <person name="Zhang Z."/>
            <person name="Bao J."/>
            <person name="Han Y."/>
            <person name="Dong L."/>
            <person name="Ji J."/>
            <person name="Chen P."/>
            <person name="Wu S."/>
            <person name="Liu J."/>
            <person name="Xiao Y."/>
            <person name="Bu D."/>
            <person name="Tan J."/>
            <person name="Yang L."/>
            <person name="Ye C."/>
            <person name="Zhang J."/>
            <person name="Xu J."/>
            <person name="Zhou Y."/>
            <person name="Yu Y."/>
            <person name="Zhang B."/>
            <person name="Zhuang S."/>
            <person name="Wei H."/>
            <person name="Liu B."/>
            <person name="Lei M."/>
            <person name="Yu H."/>
            <person name="Li Y."/>
            <person name="Xu H."/>
            <person name="Wei S."/>
            <person name="He X."/>
            <person name="Fang L."/>
            <person name="Zhang Z."/>
            <person name="Zhang Y."/>
            <person name="Huang X."/>
            <person name="Su Z."/>
            <person name="Tong W."/>
            <person name="Li J."/>
            <person name="Tong Z."/>
            <person name="Li S."/>
            <person name="Ye J."/>
            <person name="Wang L."/>
            <person name="Fang L."/>
            <person name="Lei T."/>
            <person name="Chen C.-S."/>
            <person name="Chen H.-C."/>
            <person name="Xu Z."/>
            <person name="Li H."/>
            <person name="Huang H."/>
            <person name="Zhang F."/>
            <person name="Xu H."/>
            <person name="Li N."/>
            <person name="Zhao C."/>
            <person name="Li S."/>
            <person name="Dong L."/>
            <person name="Huang Y."/>
            <person name="Li L."/>
            <person name="Xi Y."/>
            <person name="Qi Q."/>
            <person name="Li W."/>
            <person name="Zhang B."/>
            <person name="Hu W."/>
            <person name="Zhang Y."/>
            <person name="Tian X."/>
            <person name="Jiao Y."/>
            <person name="Liang X."/>
            <person name="Jin J."/>
            <person name="Gao L."/>
            <person name="Zheng W."/>
            <person name="Hao B."/>
            <person name="Liu S.-M."/>
            <person name="Wang W."/>
            <person name="Yuan L."/>
            <person name="Cao M."/>
            <person name="McDermott J."/>
            <person name="Samudrala R."/>
            <person name="Wang J."/>
            <person name="Wong G.K.-S."/>
            <person name="Yang H."/>
        </authorList>
    </citation>
    <scope>NUCLEOTIDE SEQUENCE [LARGE SCALE GENOMIC DNA]</scope>
    <source>
        <strain>cv. Nipponbare</strain>
    </source>
</reference>
<reference key="6">
    <citation type="journal article" date="2016" name="Plant Growth Regul.">
        <title>OsSNAP32, a SNAP25-type SNARE protein-encoding gene from rice, enhanced resistance to blast fungus.</title>
        <authorList>
            <person name="Luo J."/>
            <person name="Zhang H."/>
            <person name="He W."/>
            <person name="Zhang Y."/>
            <person name="Cao W."/>
            <person name="Zhang H."/>
            <person name="Bao Y."/>
        </authorList>
    </citation>
    <scope>FUNCTION</scope>
    <scope>INDUCTION</scope>
</reference>
<reference key="7">
    <citation type="journal article" date="2019" name="Plant Physiol.">
        <title>OsSYP121 accumulates at fungal penetration sites and mediates host resistance to rice blast.</title>
        <authorList>
            <person name="Cao W.L."/>
            <person name="Yu Y."/>
            <person name="Li M.Y."/>
            <person name="Luo J."/>
            <person name="Wang R.S."/>
            <person name="Tang H.J."/>
            <person name="Huang J."/>
            <person name="Wang J.F."/>
            <person name="Zhang H.S."/>
            <person name="Bao Y.M."/>
        </authorList>
    </citation>
    <scope>FUNCTION</scope>
    <scope>INTERACTION WITH SYP121</scope>
</reference>
<gene>
    <name evidence="6" type="primary">SNAP32</name>
    <name evidence="9" type="ordered locus">Os02g0437200</name>
    <name evidence="7" type="ordered locus">LOC_Os02g24080</name>
    <name evidence="10" type="ORF">OsJ_06542</name>
</gene>
<comment type="function">
    <text evidence="4 5 8">t-SNARE involved in diverse vesicle trafficking and membrane fusion processes (Probable). May be involved in resistance to the rice blast fungus Magnaporthe oryzae (PubMed:30617050, Ref.6). May contribute to host resistance to rice blast through interaction with SYP121 (PubMed:30617050).</text>
</comment>
<comment type="subunit">
    <text evidence="4">Interacts with SYP121.</text>
</comment>
<comment type="subcellular location">
    <subcellularLocation>
        <location evidence="3">Membrane</location>
    </subcellularLocation>
    <text evidence="3">Localizes to the plasma membrane.</text>
</comment>
<comment type="tissue specificity">
    <text evidence="3">Expressed in roots, culms and leaves.</text>
</comment>
<comment type="induction">
    <text evidence="3 5">Induced by infection with the rice blast fungus Magnaporthe oryzae (PubMed:17380428, Ref.6). Induced by hydrogen peroxide, osmotic stress and drought stress (PubMed:17380428).</text>
</comment>
<comment type="miscellaneous">
    <text evidence="5">Plants overexpressing SNAP32 exhibit enhanced resistance to the fungal pathogen Magnaporthe oryzae (Ref.6). Plants silencing SNAP32 exhibit increased susceptibility to the fungal pathogen Magnaporthe oryzae (Ref.6).</text>
</comment>
<comment type="similarity">
    <text evidence="7">Belongs to the SNAP-25 family.</text>
</comment>
<comment type="sequence caution" evidence="7">
    <conflict type="erroneous gene model prediction">
        <sequence resource="EMBL-CDS" id="BAS78464"/>
    </conflict>
</comment>
<keyword id="KW-0472">Membrane</keyword>
<keyword id="KW-0611">Plant defense</keyword>
<keyword id="KW-0653">Protein transport</keyword>
<keyword id="KW-1185">Reference proteome</keyword>
<keyword id="KW-0813">Transport</keyword>
<sequence>MSGRRSFFASKKPSRSSNPFDSDSDDGGREQRPARASSVPPPADQRGSLFGGGDGFSASSAAARSRYRNDFRDTGGVEAQSVQELEGYAAYKAEETTQRVQGCVRIAEEMRDTASKSLVTIHQQGQQITRTHMMTLDIDQDLSRSEKLLGDLGGIFSKKWKPKKNGEIRGPMLTRDDSFIRKGSHLEQRHKLGLSDHPPQSNARQFHSEPTSALQKVEMEKAKQDDGLSDLSNILTELKGMAVDMGTEIDRQTKALGDSEKDYDELNFRIKGANTRARRLLGK</sequence>
<name>SNP32_ORYSJ</name>
<protein>
    <recommendedName>
        <fullName evidence="6">SNAP25 homologous protein SNAP32</fullName>
    </recommendedName>
    <alternativeName>
        <fullName evidence="6">Synaptosomal-associated protein of 32 kDa</fullName>
        <shortName evidence="6">OsSNAP32</shortName>
    </alternativeName>
</protein>
<feature type="chain" id="PRO_0000456759" description="SNAP25 homologous protein SNAP32">
    <location>
        <begin position="1"/>
        <end position="283"/>
    </location>
</feature>
<feature type="domain" description="t-SNARE coiled-coil homology" evidence="1">
    <location>
        <begin position="218"/>
        <end position="280"/>
    </location>
</feature>
<feature type="region of interest" description="Disordered" evidence="2">
    <location>
        <begin position="1"/>
        <end position="64"/>
    </location>
</feature>
<feature type="region of interest" description="Disordered" evidence="2">
    <location>
        <begin position="192"/>
        <end position="212"/>
    </location>
</feature>
<feature type="compositionally biased region" description="Polar residues" evidence="2">
    <location>
        <begin position="198"/>
        <end position="212"/>
    </location>
</feature>
<feature type="sequence conflict" description="In Ref. 1; AAW82752." evidence="7" ref="1">
    <original>M</original>
    <variation>T</variation>
    <location>
        <position position="134"/>
    </location>
</feature>
<feature type="sequence conflict" description="In Ref. 1; AAW82752." evidence="7" ref="1">
    <original>F</original>
    <variation>S</variation>
    <location>
        <position position="179"/>
    </location>
</feature>
<accession>Q0E1I7</accession>
<accession>A0A0P0VIH5</accession>
<accession>A0A8I3B3R7</accession>
<accession>B9F5G0</accession>
<accession>Q5EEP3</accession>
<evidence type="ECO:0000255" key="1">
    <source>
        <dbReference type="PROSITE-ProRule" id="PRU00202"/>
    </source>
</evidence>
<evidence type="ECO:0000256" key="2">
    <source>
        <dbReference type="SAM" id="MobiDB-lite"/>
    </source>
</evidence>
<evidence type="ECO:0000269" key="3">
    <source>
    </source>
</evidence>
<evidence type="ECO:0000269" key="4">
    <source>
    </source>
</evidence>
<evidence type="ECO:0000269" key="5">
    <source ref="6"/>
</evidence>
<evidence type="ECO:0000303" key="6">
    <source>
    </source>
</evidence>
<evidence type="ECO:0000305" key="7"/>
<evidence type="ECO:0000305" key="8">
    <source ref="6"/>
</evidence>
<evidence type="ECO:0000312" key="9">
    <source>
        <dbReference type="EMBL" id="BAF08651.2"/>
    </source>
</evidence>
<evidence type="ECO:0000312" key="10">
    <source>
        <dbReference type="EMBL" id="EEE56891.1"/>
    </source>
</evidence>
<proteinExistence type="evidence at protein level"/>